<dbReference type="EMBL" id="CP000243">
    <property type="protein sequence ID" value="ABE09902.1"/>
    <property type="molecule type" value="Genomic_DNA"/>
</dbReference>
<dbReference type="RefSeq" id="WP_000063507.1">
    <property type="nucleotide sequence ID" value="NZ_CP064825.1"/>
</dbReference>
<dbReference type="GeneID" id="75174148"/>
<dbReference type="KEGG" id="eci:UTI89_C4490"/>
<dbReference type="HOGENOM" id="CLU_066437_0_0_6"/>
<dbReference type="Proteomes" id="UP000001952">
    <property type="component" value="Chromosome"/>
</dbReference>
<dbReference type="GO" id="GO:0005886">
    <property type="term" value="C:plasma membrane"/>
    <property type="evidence" value="ECO:0007669"/>
    <property type="project" value="UniProtKB-SubCell"/>
</dbReference>
<dbReference type="GO" id="GO:0015153">
    <property type="term" value="F:rhamnose transmembrane transporter activity"/>
    <property type="evidence" value="ECO:0007669"/>
    <property type="project" value="UniProtKB-UniRule"/>
</dbReference>
<dbReference type="GO" id="GO:0015293">
    <property type="term" value="F:symporter activity"/>
    <property type="evidence" value="ECO:0007669"/>
    <property type="project" value="UniProtKB-KW"/>
</dbReference>
<dbReference type="HAMAP" id="MF_01532">
    <property type="entry name" value="RhaT"/>
    <property type="match status" value="1"/>
</dbReference>
<dbReference type="InterPro" id="IPR004673">
    <property type="entry name" value="L-rhamnose-proton_sym_RhaT"/>
</dbReference>
<dbReference type="NCBIfam" id="NF010021">
    <property type="entry name" value="PRK13499.1-1"/>
    <property type="match status" value="1"/>
</dbReference>
<dbReference type="NCBIfam" id="NF010023">
    <property type="entry name" value="PRK13499.1-3"/>
    <property type="match status" value="1"/>
</dbReference>
<dbReference type="NCBIfam" id="TIGR00776">
    <property type="entry name" value="RhaT"/>
    <property type="match status" value="1"/>
</dbReference>
<dbReference type="Pfam" id="PF06379">
    <property type="entry name" value="RhaT"/>
    <property type="match status" value="1"/>
</dbReference>
<keyword id="KW-0997">Cell inner membrane</keyword>
<keyword id="KW-1003">Cell membrane</keyword>
<keyword id="KW-0472">Membrane</keyword>
<keyword id="KW-0762">Sugar transport</keyword>
<keyword id="KW-0769">Symport</keyword>
<keyword id="KW-0812">Transmembrane</keyword>
<keyword id="KW-1133">Transmembrane helix</keyword>
<keyword id="KW-0813">Transport</keyword>
<reference key="1">
    <citation type="journal article" date="2006" name="Proc. Natl. Acad. Sci. U.S.A.">
        <title>Identification of genes subject to positive selection in uropathogenic strains of Escherichia coli: a comparative genomics approach.</title>
        <authorList>
            <person name="Chen S.L."/>
            <person name="Hung C.-S."/>
            <person name="Xu J."/>
            <person name="Reigstad C.S."/>
            <person name="Magrini V."/>
            <person name="Sabo A."/>
            <person name="Blasiar D."/>
            <person name="Bieri T."/>
            <person name="Meyer R.R."/>
            <person name="Ozersky P."/>
            <person name="Armstrong J.R."/>
            <person name="Fulton R.S."/>
            <person name="Latreille J.P."/>
            <person name="Spieth J."/>
            <person name="Hooton T.M."/>
            <person name="Mardis E.R."/>
            <person name="Hultgren S.J."/>
            <person name="Gordon J.I."/>
        </authorList>
    </citation>
    <scope>NUCLEOTIDE SEQUENCE [LARGE SCALE GENOMIC DNA]</scope>
    <source>
        <strain>UTI89 / UPEC</strain>
    </source>
</reference>
<comment type="function">
    <text evidence="1">Uptake of L-rhamnose across the cytoplasmic membrane with the concomitant transport of protons into the cell (symport system).</text>
</comment>
<comment type="catalytic activity">
    <reaction evidence="1">
        <text>L-rhamnopyranose(in) + H(+)(in) = L-rhamnopyranose(out) + H(+)(out)</text>
        <dbReference type="Rhea" id="RHEA:29947"/>
        <dbReference type="ChEBI" id="CHEBI:15378"/>
        <dbReference type="ChEBI" id="CHEBI:62346"/>
    </reaction>
    <physiologicalReaction direction="right-to-left" evidence="1">
        <dbReference type="Rhea" id="RHEA:29949"/>
    </physiologicalReaction>
</comment>
<comment type="subcellular location">
    <subcellularLocation>
        <location evidence="1">Cell inner membrane</location>
        <topology evidence="1">Multi-pass membrane protein</topology>
    </subcellularLocation>
</comment>
<comment type="similarity">
    <text evidence="1">Belongs to the L-rhamnose transporter (TC 2.A.7.6) family.</text>
</comment>
<name>RHAT_ECOUT</name>
<sequence>MSNAITMGIFWHLIGAASAACFYAPFKKVKKWSWETMWSVGGIVSWIILPWAISALLLPNFWAYYSSFSLSTLLPVFLFGAMWGIGNINYGLTMRYLGMSMGIGIAIGITLIVGTLMTPIINGNFDVLINTEGGRMTLLGVLVALIGVGIVTRAGQLKERKMGIKAEEFNLKKGLVLAVMCGIFSAGMSFAMNAAKPMHEAAAALGVDPLYVALPSYVVIMGGGAIINLGFCFIRLAKVKDLSLKADFSLAKPLIIHNVLLSALGGLMWYLQFFFYAWGHARIPAQYDYISWMLHMSFYVLCGGIVGLVLKEWNNAGRRPVTVLSLGCVVIIVAANIVGIGMAN</sequence>
<protein>
    <recommendedName>
        <fullName evidence="1">L-rhamnose-proton symporter</fullName>
    </recommendedName>
    <alternativeName>
        <fullName evidence="1">L-rhamnose-H(+) transport protein</fullName>
    </alternativeName>
</protein>
<evidence type="ECO:0000255" key="1">
    <source>
        <dbReference type="HAMAP-Rule" id="MF_01532"/>
    </source>
</evidence>
<organism>
    <name type="scientific">Escherichia coli (strain UTI89 / UPEC)</name>
    <dbReference type="NCBI Taxonomy" id="364106"/>
    <lineage>
        <taxon>Bacteria</taxon>
        <taxon>Pseudomonadati</taxon>
        <taxon>Pseudomonadota</taxon>
        <taxon>Gammaproteobacteria</taxon>
        <taxon>Enterobacterales</taxon>
        <taxon>Enterobacteriaceae</taxon>
        <taxon>Escherichia</taxon>
    </lineage>
</organism>
<proteinExistence type="inferred from homology"/>
<feature type="chain" id="PRO_0000292763" description="L-rhamnose-proton symporter">
    <location>
        <begin position="1"/>
        <end position="344"/>
    </location>
</feature>
<feature type="transmembrane region" description="Helical" evidence="1">
    <location>
        <begin position="4"/>
        <end position="24"/>
    </location>
</feature>
<feature type="transmembrane region" description="Helical" evidence="1">
    <location>
        <begin position="38"/>
        <end position="58"/>
    </location>
</feature>
<feature type="transmembrane region" description="Helical" evidence="1">
    <location>
        <begin position="68"/>
        <end position="88"/>
    </location>
</feature>
<feature type="transmembrane region" description="Helical" evidence="1">
    <location>
        <begin position="101"/>
        <end position="121"/>
    </location>
</feature>
<feature type="transmembrane region" description="Helical" evidence="1">
    <location>
        <begin position="137"/>
        <end position="157"/>
    </location>
</feature>
<feature type="transmembrane region" description="Helical" evidence="1">
    <location>
        <begin position="175"/>
        <end position="195"/>
    </location>
</feature>
<feature type="transmembrane region" description="Helical" evidence="1">
    <location>
        <begin position="214"/>
        <end position="234"/>
    </location>
</feature>
<feature type="transmembrane region" description="Helical" evidence="1">
    <location>
        <begin position="259"/>
        <end position="279"/>
    </location>
</feature>
<feature type="transmembrane region" description="Helical" evidence="1">
    <location>
        <begin position="290"/>
        <end position="310"/>
    </location>
</feature>
<feature type="transmembrane region" description="Helical" evidence="1">
    <location>
        <begin position="323"/>
        <end position="343"/>
    </location>
</feature>
<accession>Q1R412</accession>
<gene>
    <name evidence="1" type="primary">rhaT</name>
    <name type="ordered locus">UTI89_C4490</name>
</gene>